<dbReference type="EC" id="2.3.1.35" evidence="1"/>
<dbReference type="EC" id="2.3.1.1" evidence="1"/>
<dbReference type="EMBL" id="EQ966367">
    <property type="protein sequence ID" value="EED79784.1"/>
    <property type="molecule type" value="Genomic_DNA"/>
</dbReference>
<dbReference type="RefSeq" id="XP_002475039.1">
    <property type="nucleotide sequence ID" value="XM_002474994.1"/>
</dbReference>
<dbReference type="SMR" id="B8PH83"/>
<dbReference type="FunCoup" id="B8PH83">
    <property type="interactions" value="52"/>
</dbReference>
<dbReference type="STRING" id="561896.B8PH83"/>
<dbReference type="MEROPS" id="T05.001"/>
<dbReference type="KEGG" id="ppl:POSPLDRAFT_134690"/>
<dbReference type="HOGENOM" id="CLU_027172_1_0_1"/>
<dbReference type="InParanoid" id="B8PH83"/>
<dbReference type="OrthoDB" id="2017946at2759"/>
<dbReference type="UniPathway" id="UPA00068">
    <property type="reaction ID" value="UER00106"/>
</dbReference>
<dbReference type="UniPathway" id="UPA00068">
    <property type="reaction ID" value="UER00111"/>
</dbReference>
<dbReference type="GO" id="GO:0005759">
    <property type="term" value="C:mitochondrial matrix"/>
    <property type="evidence" value="ECO:0007669"/>
    <property type="project" value="UniProtKB-SubCell"/>
</dbReference>
<dbReference type="GO" id="GO:0004358">
    <property type="term" value="F:glutamate N-acetyltransferase activity"/>
    <property type="evidence" value="ECO:0007669"/>
    <property type="project" value="UniProtKB-UniRule"/>
</dbReference>
<dbReference type="GO" id="GO:0004042">
    <property type="term" value="F:L-glutamate N-acetyltransferase activity"/>
    <property type="evidence" value="ECO:0007669"/>
    <property type="project" value="UniProtKB-UniRule"/>
</dbReference>
<dbReference type="GO" id="GO:0006526">
    <property type="term" value="P:L-arginine biosynthetic process"/>
    <property type="evidence" value="ECO:0007669"/>
    <property type="project" value="UniProtKB-UniRule"/>
</dbReference>
<dbReference type="GO" id="GO:0006592">
    <property type="term" value="P:ornithine biosynthetic process"/>
    <property type="evidence" value="ECO:0007669"/>
    <property type="project" value="TreeGrafter"/>
</dbReference>
<dbReference type="CDD" id="cd02152">
    <property type="entry name" value="OAT"/>
    <property type="match status" value="1"/>
</dbReference>
<dbReference type="FunFam" id="3.10.20.340:FF:000002">
    <property type="entry name" value="Arginine biosynthesis bifunctional protein ArgJ, mitochondrial"/>
    <property type="match status" value="1"/>
</dbReference>
<dbReference type="FunFam" id="3.30.2330.10:FF:000001">
    <property type="entry name" value="Arginine biosynthesis bifunctional protein ArgJ, mitochondrial"/>
    <property type="match status" value="1"/>
</dbReference>
<dbReference type="Gene3D" id="3.30.2330.10">
    <property type="entry name" value="arginine biosynthesis bifunctional protein suprefamily"/>
    <property type="match status" value="1"/>
</dbReference>
<dbReference type="Gene3D" id="3.10.20.340">
    <property type="entry name" value="ArgJ beta chain, C-terminal domain"/>
    <property type="match status" value="1"/>
</dbReference>
<dbReference type="Gene3D" id="3.60.70.12">
    <property type="entry name" value="L-amino peptidase D-ALA esterase/amidase"/>
    <property type="match status" value="1"/>
</dbReference>
<dbReference type="HAMAP" id="MF_01106">
    <property type="entry name" value="ArgJ"/>
    <property type="match status" value="1"/>
</dbReference>
<dbReference type="InterPro" id="IPR002813">
    <property type="entry name" value="Arg_biosynth_ArgJ"/>
</dbReference>
<dbReference type="InterPro" id="IPR016117">
    <property type="entry name" value="ArgJ-like_dom_sf"/>
</dbReference>
<dbReference type="InterPro" id="IPR042195">
    <property type="entry name" value="ArgJ_beta_C"/>
</dbReference>
<dbReference type="NCBIfam" id="TIGR00120">
    <property type="entry name" value="ArgJ"/>
    <property type="match status" value="1"/>
</dbReference>
<dbReference type="NCBIfam" id="NF003802">
    <property type="entry name" value="PRK05388.1"/>
    <property type="match status" value="1"/>
</dbReference>
<dbReference type="PANTHER" id="PTHR23100">
    <property type="entry name" value="ARGININE BIOSYNTHESIS BIFUNCTIONAL PROTEIN ARGJ"/>
    <property type="match status" value="1"/>
</dbReference>
<dbReference type="PANTHER" id="PTHR23100:SF0">
    <property type="entry name" value="ARGININE BIOSYNTHESIS BIFUNCTIONAL PROTEIN ARGJ, MITOCHONDRIAL"/>
    <property type="match status" value="1"/>
</dbReference>
<dbReference type="Pfam" id="PF01960">
    <property type="entry name" value="ArgJ"/>
    <property type="match status" value="1"/>
</dbReference>
<dbReference type="SUPFAM" id="SSF56266">
    <property type="entry name" value="DmpA/ArgJ-like"/>
    <property type="match status" value="1"/>
</dbReference>
<evidence type="ECO:0000255" key="1">
    <source>
        <dbReference type="HAMAP-Rule" id="MF_03124"/>
    </source>
</evidence>
<feature type="chain" id="PRO_0000398092" description="Arginine biosynthesis bifunctional protein ArgJ alpha chain" evidence="1">
    <location>
        <begin position="1"/>
        <end position="235"/>
    </location>
</feature>
<feature type="chain" id="PRO_0000398093" description="Arginine biosynthesis bifunctional protein ArgJ beta chain" evidence="1">
    <location>
        <begin position="236"/>
        <end position="462"/>
    </location>
</feature>
<feature type="active site" description="Nucleophile" evidence="1">
    <location>
        <position position="236"/>
    </location>
</feature>
<feature type="binding site" evidence="1">
    <location>
        <position position="189"/>
    </location>
    <ligand>
        <name>substrate</name>
    </ligand>
</feature>
<feature type="binding site" evidence="1">
    <location>
        <position position="215"/>
    </location>
    <ligand>
        <name>substrate</name>
    </ligand>
</feature>
<feature type="binding site" evidence="1">
    <location>
        <position position="236"/>
    </location>
    <ligand>
        <name>substrate</name>
    </ligand>
</feature>
<feature type="binding site" evidence="1">
    <location>
        <position position="327"/>
    </location>
    <ligand>
        <name>substrate</name>
    </ligand>
</feature>
<feature type="binding site" evidence="1">
    <location>
        <position position="457"/>
    </location>
    <ligand>
        <name>substrate</name>
    </ligand>
</feature>
<feature type="binding site" evidence="1">
    <location>
        <position position="462"/>
    </location>
    <ligand>
        <name>substrate</name>
    </ligand>
</feature>
<feature type="site" description="Involved in the stabilization of negative charge on the oxyanion by the formation of the oxyanion hole" evidence="1">
    <location>
        <position position="145"/>
    </location>
</feature>
<feature type="site" description="Involved in the stabilization of negative charge on the oxyanion by the formation of the oxyanion hole" evidence="1">
    <location>
        <position position="146"/>
    </location>
</feature>
<feature type="site" description="Cleavage; by autolysis" evidence="1">
    <location>
        <begin position="235"/>
        <end position="236"/>
    </location>
</feature>
<name>ARGJ_POSPM</name>
<reference key="1">
    <citation type="journal article" date="2009" name="Proc. Natl. Acad. Sci. U.S.A.">
        <title>Genome, transcriptome, and secretome analysis of wood decay fungus Postia placenta supports unique mechanisms of lignocellulose conversion.</title>
        <authorList>
            <person name="Martinez D."/>
            <person name="Challacombe J."/>
            <person name="Morgenstern I."/>
            <person name="Hibbett D."/>
            <person name="Schmoll M."/>
            <person name="Kubicek C.P."/>
            <person name="Ferreira P."/>
            <person name="Ruiz-Duenas F.J."/>
            <person name="Martinez A.T."/>
            <person name="Kersten P."/>
            <person name="Hammel K.E."/>
            <person name="Vanden Wymelenberg A."/>
            <person name="Gaskell J."/>
            <person name="Lindquist E."/>
            <person name="Sabat G."/>
            <person name="Splinter BonDurant S."/>
            <person name="Larrondo L.F."/>
            <person name="Canessa P."/>
            <person name="Vicuna R."/>
            <person name="Yadav J."/>
            <person name="Doddapaneni H."/>
            <person name="Subramanian V."/>
            <person name="Pisabarro A.G."/>
            <person name="Lavin J.L."/>
            <person name="Oguiza J.A."/>
            <person name="Master E."/>
            <person name="Henrissat B."/>
            <person name="Coutinho P.M."/>
            <person name="Harris P."/>
            <person name="Magnuson J.K."/>
            <person name="Baker S.E."/>
            <person name="Bruno K."/>
            <person name="Kenealy W."/>
            <person name="Hoegger P.J."/>
            <person name="Kuees U."/>
            <person name="Ramaiya P."/>
            <person name="Lucas S."/>
            <person name="Salamov A."/>
            <person name="Shapiro H."/>
            <person name="Tu H."/>
            <person name="Chee C.L."/>
            <person name="Misra M."/>
            <person name="Xie G."/>
            <person name="Teter S."/>
            <person name="Yaver D."/>
            <person name="James T."/>
            <person name="Mokrejs M."/>
            <person name="Pospisek M."/>
            <person name="Grigoriev I.V."/>
            <person name="Brettin T."/>
            <person name="Rokhsar D."/>
            <person name="Berka R."/>
            <person name="Cullen D."/>
        </authorList>
    </citation>
    <scope>NUCLEOTIDE SEQUENCE [LARGE SCALE GENOMIC DNA]</scope>
    <source>
        <strain>ATCC 44394 / Madison 698-R</strain>
    </source>
</reference>
<proteinExistence type="inferred from homology"/>
<gene>
    <name type="ORF">POSPLDRAFT_134690</name>
</gene>
<keyword id="KW-0012">Acyltransferase</keyword>
<keyword id="KW-0028">Amino-acid biosynthesis</keyword>
<keyword id="KW-0055">Arginine biosynthesis</keyword>
<keyword id="KW-0068">Autocatalytic cleavage</keyword>
<keyword id="KW-0496">Mitochondrion</keyword>
<keyword id="KW-0511">Multifunctional enzyme</keyword>
<keyword id="KW-0808">Transferase</keyword>
<protein>
    <recommendedName>
        <fullName evidence="1">Arginine biosynthesis bifunctional protein ArgJ, mitochondrial</fullName>
    </recommendedName>
    <domain>
        <recommendedName>
            <fullName evidence="1">Glutamate N-acetyltransferase</fullName>
            <shortName evidence="1">GAT</shortName>
            <ecNumber evidence="1">2.3.1.35</ecNumber>
        </recommendedName>
        <alternativeName>
            <fullName evidence="1">Ornithine acetyltransferase</fullName>
            <shortName evidence="1">OATase</shortName>
        </alternativeName>
        <alternativeName>
            <fullName evidence="1">Ornithine transacetylase</fullName>
        </alternativeName>
    </domain>
    <domain>
        <recommendedName>
            <fullName evidence="1">Amino-acid acetyltransferase</fullName>
            <ecNumber evidence="1">2.3.1.1</ecNumber>
        </recommendedName>
        <alternativeName>
            <fullName evidence="1">N-acetylglutamate synthase</fullName>
            <shortName evidence="1">AGS</shortName>
        </alternativeName>
    </domain>
    <component>
        <recommendedName>
            <fullName evidence="1">Arginine biosynthesis bifunctional protein ArgJ alpha chain</fullName>
        </recommendedName>
    </component>
    <component>
        <recommendedName>
            <fullName evidence="1">Arginine biosynthesis bifunctional protein ArgJ beta chain</fullName>
        </recommendedName>
    </component>
</protein>
<sequence>MSARLPALWKRLSSTISPRPAPPKAHHHAPIREAAFPNGYVLTGLHCGIKKTGALDLAVILSTTPKPASAAACFTRNAFKAAPVVVSEEVLQRSASTARALVVNSGCANAVTGKQGMEDAWAMVRATDALLGHSAKESETLVMSTGVIGQTLPICKVLAGIESQSSDSQTKSLGSDFTAWERAAKAFMTTDTFPKLRARTFSIDGREYKMAGMDKGAGMIHPDMGPPRMAGQLHATLLGCIMTDAAVSPRSLQSALTYAVDRSFNSISVDGDMSTNDTIVVLANGSAASDPAAEIDEERDPRTYQIFRDELTTFAADLAQLVVRDGEGATKFVTVSVNGAATYEDAHRIASRISTSALVKTALYGQDANWGRILAATGSVPLSVPIDPTRVSVSFIPTDGSPALPLLVNGEPETVDEARAKEIISVEDLEIEVQLGIGSENAKYWTCDFSYEYVRINGDYRS</sequence>
<comment type="function">
    <text evidence="1">Catalyzes two activities which are involved in the cyclic version of arginine biosynthesis: the synthesis of acetylglutamate from glutamate and acetyl-CoA, and of ornithine by transacetylation between acetylornithine and glutamate.</text>
</comment>
<comment type="catalytic activity">
    <reaction evidence="1">
        <text>N(2)-acetyl-L-ornithine + L-glutamate = N-acetyl-L-glutamate + L-ornithine</text>
        <dbReference type="Rhea" id="RHEA:15349"/>
        <dbReference type="ChEBI" id="CHEBI:29985"/>
        <dbReference type="ChEBI" id="CHEBI:44337"/>
        <dbReference type="ChEBI" id="CHEBI:46911"/>
        <dbReference type="ChEBI" id="CHEBI:57805"/>
        <dbReference type="EC" id="2.3.1.35"/>
    </reaction>
</comment>
<comment type="catalytic activity">
    <reaction evidence="1">
        <text>L-glutamate + acetyl-CoA = N-acetyl-L-glutamate + CoA + H(+)</text>
        <dbReference type="Rhea" id="RHEA:24292"/>
        <dbReference type="ChEBI" id="CHEBI:15378"/>
        <dbReference type="ChEBI" id="CHEBI:29985"/>
        <dbReference type="ChEBI" id="CHEBI:44337"/>
        <dbReference type="ChEBI" id="CHEBI:57287"/>
        <dbReference type="ChEBI" id="CHEBI:57288"/>
        <dbReference type="EC" id="2.3.1.1"/>
    </reaction>
</comment>
<comment type="pathway">
    <text evidence="1">Amino-acid biosynthesis; L-arginine biosynthesis; L-ornithine and N-acetyl-L-glutamate from L-glutamate and N(2)-acetyl-L-ornithine (cyclic): step 1/1.</text>
</comment>
<comment type="pathway">
    <text evidence="1">Amino-acid biosynthesis; L-arginine biosynthesis; N(2)-acetyl-L-ornithine from L-glutamate: step 1/4.</text>
</comment>
<comment type="subunit">
    <text evidence="1">Heterodimer of an alpha and a beta chain.</text>
</comment>
<comment type="subcellular location">
    <subcellularLocation>
        <location evidence="1">Mitochondrion matrix</location>
    </subcellularLocation>
</comment>
<comment type="PTM">
    <text evidence="1">The alpha and beta chains are autoproteolytically processed from a single precursor protein within the mitochondrion.</text>
</comment>
<comment type="miscellaneous">
    <text evidence="1">This protein may be expected to contain an N-terminal transit peptide but none has been predicted.</text>
</comment>
<comment type="similarity">
    <text evidence="1">Belongs to the ArgJ family.</text>
</comment>
<organism>
    <name type="scientific">Postia placenta (strain ATCC 44394 / Madison 698-R)</name>
    <name type="common">Brown rot fungus</name>
    <name type="synonym">Poria monticola</name>
    <dbReference type="NCBI Taxonomy" id="561896"/>
    <lineage>
        <taxon>Eukaryota</taxon>
        <taxon>Fungi</taxon>
        <taxon>Dikarya</taxon>
        <taxon>Basidiomycota</taxon>
        <taxon>Agaricomycotina</taxon>
        <taxon>Agaricomycetes</taxon>
        <taxon>Polyporales</taxon>
        <taxon>Adustoporiaceae</taxon>
        <taxon>Rhodonia</taxon>
    </lineage>
</organism>
<accession>B8PH83</accession>